<evidence type="ECO:0000250" key="1">
    <source>
        <dbReference type="UniProtKB" id="P01514"/>
    </source>
</evidence>
<evidence type="ECO:0000250" key="2">
    <source>
        <dbReference type="UniProtKB" id="P84914"/>
    </source>
</evidence>
<evidence type="ECO:0000255" key="3"/>
<evidence type="ECO:0000269" key="4">
    <source>
    </source>
</evidence>
<evidence type="ECO:0000269" key="5">
    <source>
    </source>
</evidence>
<evidence type="ECO:0000269" key="6">
    <source ref="2"/>
</evidence>
<evidence type="ECO:0000303" key="7">
    <source>
    </source>
</evidence>
<evidence type="ECO:0000303" key="8">
    <source>
    </source>
</evidence>
<evidence type="ECO:0000305" key="9"/>
<evidence type="ECO:0000305" key="10">
    <source>
    </source>
</evidence>
<evidence type="ECO:0000305" key="11">
    <source ref="2"/>
</evidence>
<evidence type="ECO:0000312" key="12">
    <source>
        <dbReference type="EMBL" id="AIK26613.1"/>
    </source>
</evidence>
<accession>P17238</accession>
<accession>A0A076VES2</accession>
<protein>
    <recommendedName>
        <fullName>Mastoparan</fullName>
    </recommendedName>
    <alternativeName>
        <fullName>Histamine-releasing peptide I</fullName>
        <shortName evidence="7">HR-1</shortName>
        <shortName>HR-I</shortName>
        <shortName evidence="8">HR1</shortName>
    </alternativeName>
</protein>
<reference evidence="12" key="1">
    <citation type="submission" date="2014-05" db="EMBL/GenBank/DDBJ databases">
        <title>Gene cloning and characterization of a novel mastoparan-like peptide from the venom of social wasp: Vespa orientalis.</title>
        <authorList>
            <person name="Jalaei J."/>
            <person name="Hosseini A."/>
            <person name="Rajaian H."/>
            <person name="Fazeli M."/>
        </authorList>
    </citation>
    <scope>NUCLEOTIDE SEQUENCE [MRNA]</scope>
    <source>
        <tissue>Venom gland</tissue>
    </source>
</reference>
<reference key="2">
    <citation type="journal article" date="1981" name="Bioorg. Khim.">
        <title>Structure and properties of histamine releasing peptides from the venom of Vespa orientalis hornet.</title>
        <authorList>
            <person name="Miroshnikov A.I."/>
            <person name="Snezhkova L.G."/>
            <person name="Nazimov I.V."/>
            <person name="Reshetova O.I."/>
            <person name="Rozynov B.V."/>
            <person name="Gushchin I.S."/>
        </authorList>
    </citation>
    <scope>PROTEIN SEQUENCE</scope>
    <scope>FUNCTION</scope>
    <scope>AMIDATION AT LEU-59</scope>
    <scope>SUBCELLULAR LOCATION</scope>
    <source>
        <tissue>Venom</tissue>
    </source>
</reference>
<reference key="3">
    <citation type="journal article" date="1988" name="Biokhimiia">
        <title>Low-molecular-weight peptides of venom of the giant hornet Vespa orientalis. Structure and function.</title>
        <authorList>
            <person name="Tuichibaev M.U."/>
            <person name="Akhmedova N.U."/>
            <person name="Kazakov I."/>
            <person name="Korneev A.S."/>
            <person name="Gagel'gans A.I."/>
        </authorList>
    </citation>
    <scope>PROTEIN SEQUENCE</scope>
    <scope>FUNCTION</scope>
    <scope>SUBCELLULAR LOCATION</scope>
    <source>
        <tissue>Venom</tissue>
    </source>
</reference>
<reference key="4">
    <citation type="journal article" date="2018" name="Mol. Neurobiol.">
        <title>Pro-necrotic activity of cationic mastoparan peptides in human glioblastoma multiforme cells via membranolytic action.</title>
        <authorList>
            <person name="da Silva A.M.B."/>
            <person name="Silva-Goncalves L.C."/>
            <person name="Oliveira F.A."/>
            <person name="Arcisio-Miranda M."/>
        </authorList>
    </citation>
    <scope>FUNCTION</scope>
    <scope>SUBCELLULAR LOCATION</scope>
</reference>
<sequence length="60" mass="6157">MKDTILILFTAFIALLGFFGMSAEALADPLADPSAGPNAEADPEAINLKAIAALVKKVLG</sequence>
<comment type="function">
    <text evidence="1 2 4 5 6">Mast cell degranulating peptide (PubMed:2453223, Ref.2). Its mast cell degranulation activity may be related to the activation of G-protein coupled receptors in mast cells as well as interaction with other proteins located in cell endosomal membranes in the mast cells (By similarity). Has a membranolytic activity on human glioblastoma multiforme cells (brain tumor cells) that leads to cell necrosis (PubMed:28965321).</text>
</comment>
<comment type="subcellular location">
    <subcellularLocation>
        <location evidence="4 6">Secreted</location>
    </subcellularLocation>
    <subcellularLocation>
        <location evidence="5">Target cell membrane</location>
    </subcellularLocation>
    <text evidence="5">Has an amphipathic alpha-helical conformation in a lipid environment.</text>
</comment>
<comment type="tissue specificity">
    <text evidence="10 11">Expressed by the venom gland.</text>
</comment>
<comment type="similarity">
    <text evidence="9">Belongs to the MCD family. Mastoparan subfamily.</text>
</comment>
<feature type="signal peptide" evidence="3">
    <location>
        <begin position="1"/>
        <end position="27"/>
    </location>
</feature>
<feature type="propeptide" id="PRO_0000458821" evidence="9">
    <location>
        <begin position="28"/>
        <end position="45"/>
    </location>
</feature>
<feature type="peptide" id="PRO_0000044062" description="Mastoparan" evidence="4 6">
    <location>
        <begin position="46"/>
        <end position="59"/>
    </location>
</feature>
<feature type="repeat" description="AXPX 1" evidence="9">
    <location>
        <begin position="27"/>
        <end position="30"/>
    </location>
</feature>
<feature type="repeat" description="AXPX 2" evidence="9">
    <location>
        <begin position="31"/>
        <end position="34"/>
    </location>
</feature>
<feature type="repeat" description="AXPX 3" evidence="9">
    <location>
        <begin position="35"/>
        <end position="38"/>
    </location>
</feature>
<feature type="repeat" description="AXPX 4" evidence="9">
    <location>
        <begin position="41"/>
        <end position="44"/>
    </location>
</feature>
<feature type="modified residue" description="Leucine amide" evidence="6">
    <location>
        <position position="59"/>
    </location>
</feature>
<organism>
    <name type="scientific">Vespa orientalis</name>
    <name type="common">Oriental hornet</name>
    <dbReference type="NCBI Taxonomy" id="7447"/>
    <lineage>
        <taxon>Eukaryota</taxon>
        <taxon>Metazoa</taxon>
        <taxon>Ecdysozoa</taxon>
        <taxon>Arthropoda</taxon>
        <taxon>Hexapoda</taxon>
        <taxon>Insecta</taxon>
        <taxon>Pterygota</taxon>
        <taxon>Neoptera</taxon>
        <taxon>Endopterygota</taxon>
        <taxon>Hymenoptera</taxon>
        <taxon>Apocrita</taxon>
        <taxon>Aculeata</taxon>
        <taxon>Vespoidea</taxon>
        <taxon>Vespidae</taxon>
        <taxon>Vespinae</taxon>
        <taxon>Vespa</taxon>
    </lineage>
</organism>
<proteinExistence type="evidence at protein level"/>
<name>MAST_VESOR</name>
<keyword id="KW-0027">Amidation</keyword>
<keyword id="KW-0903">Direct protein sequencing</keyword>
<keyword id="KW-1213">G-protein coupled receptor impairing toxin</keyword>
<keyword id="KW-0467">Mast cell degranulation</keyword>
<keyword id="KW-0472">Membrane</keyword>
<keyword id="KW-0677">Repeat</keyword>
<keyword id="KW-0964">Secreted</keyword>
<keyword id="KW-0732">Signal</keyword>
<keyword id="KW-1052">Target cell membrane</keyword>
<keyword id="KW-1053">Target membrane</keyword>
<keyword id="KW-0800">Toxin</keyword>
<dbReference type="EMBL" id="KJ830124">
    <property type="protein sequence ID" value="AIK26613.1"/>
    <property type="molecule type" value="mRNA"/>
</dbReference>
<dbReference type="PIR" id="JN0389">
    <property type="entry name" value="JN0389"/>
</dbReference>
<dbReference type="TCDB" id="1.C.32.1.3">
    <property type="family name" value="the amphipathic peptide mastoparan (mastoparan) family"/>
</dbReference>
<dbReference type="GO" id="GO:0005576">
    <property type="term" value="C:extracellular region"/>
    <property type="evidence" value="ECO:0007669"/>
    <property type="project" value="UniProtKB-SubCell"/>
</dbReference>
<dbReference type="GO" id="GO:0016020">
    <property type="term" value="C:membrane"/>
    <property type="evidence" value="ECO:0007669"/>
    <property type="project" value="UniProtKB-KW"/>
</dbReference>
<dbReference type="GO" id="GO:0044218">
    <property type="term" value="C:other organism cell membrane"/>
    <property type="evidence" value="ECO:0007669"/>
    <property type="project" value="UniProtKB-KW"/>
</dbReference>
<dbReference type="GO" id="GO:0090729">
    <property type="term" value="F:toxin activity"/>
    <property type="evidence" value="ECO:0007669"/>
    <property type="project" value="UniProtKB-KW"/>
</dbReference>
<dbReference type="InterPro" id="IPR013213">
    <property type="entry name" value="Mastoparan"/>
</dbReference>
<dbReference type="Pfam" id="PF08249">
    <property type="entry name" value="Mastoparan"/>
    <property type="match status" value="1"/>
</dbReference>